<accession>Q54TH9</accession>
<feature type="chain" id="PRO_0000380222" description="Rho GTPase-activating protein gacY">
    <location>
        <begin position="1"/>
        <end position="721"/>
    </location>
</feature>
<feature type="domain" description="CRAL-TRIO" evidence="2">
    <location>
        <begin position="363"/>
        <end position="520"/>
    </location>
</feature>
<feature type="domain" description="Rho-GAP" evidence="3">
    <location>
        <begin position="528"/>
        <end position="719"/>
    </location>
</feature>
<feature type="region of interest" description="Disordered" evidence="4">
    <location>
        <begin position="1"/>
        <end position="325"/>
    </location>
</feature>
<feature type="compositionally biased region" description="Low complexity" evidence="4">
    <location>
        <begin position="17"/>
        <end position="33"/>
    </location>
</feature>
<feature type="compositionally biased region" description="Pro residues" evidence="4">
    <location>
        <begin position="34"/>
        <end position="44"/>
    </location>
</feature>
<feature type="compositionally biased region" description="Low complexity" evidence="4">
    <location>
        <begin position="146"/>
        <end position="168"/>
    </location>
</feature>
<feature type="compositionally biased region" description="Acidic residues" evidence="4">
    <location>
        <begin position="169"/>
        <end position="181"/>
    </location>
</feature>
<feature type="compositionally biased region" description="Polar residues" evidence="4">
    <location>
        <begin position="182"/>
        <end position="202"/>
    </location>
</feature>
<feature type="compositionally biased region" description="Polar residues" evidence="4">
    <location>
        <begin position="219"/>
        <end position="240"/>
    </location>
</feature>
<feature type="compositionally biased region" description="Low complexity" evidence="4">
    <location>
        <begin position="308"/>
        <end position="323"/>
    </location>
</feature>
<feature type="site" description="Arginine finger; crucial for GTP hydrolysis by stabilizing the transition state" evidence="3">
    <location>
        <position position="566"/>
    </location>
</feature>
<protein>
    <recommendedName>
        <fullName>Rho GTPase-activating protein gacY</fullName>
    </recommendedName>
    <alternativeName>
        <fullName>GTPase activating factor for raC protein Y</fullName>
    </alternativeName>
</protein>
<gene>
    <name type="primary">gacY</name>
    <name type="ORF">DDB_G0281739</name>
</gene>
<reference key="1">
    <citation type="journal article" date="2005" name="Nature">
        <title>The genome of the social amoeba Dictyostelium discoideum.</title>
        <authorList>
            <person name="Eichinger L."/>
            <person name="Pachebat J.A."/>
            <person name="Gloeckner G."/>
            <person name="Rajandream M.A."/>
            <person name="Sucgang R."/>
            <person name="Berriman M."/>
            <person name="Song J."/>
            <person name="Olsen R."/>
            <person name="Szafranski K."/>
            <person name="Xu Q."/>
            <person name="Tunggal B."/>
            <person name="Kummerfeld S."/>
            <person name="Madera M."/>
            <person name="Konfortov B.A."/>
            <person name="Rivero F."/>
            <person name="Bankier A.T."/>
            <person name="Lehmann R."/>
            <person name="Hamlin N."/>
            <person name="Davies R."/>
            <person name="Gaudet P."/>
            <person name="Fey P."/>
            <person name="Pilcher K."/>
            <person name="Chen G."/>
            <person name="Saunders D."/>
            <person name="Sodergren E.J."/>
            <person name="Davis P."/>
            <person name="Kerhornou A."/>
            <person name="Nie X."/>
            <person name="Hall N."/>
            <person name="Anjard C."/>
            <person name="Hemphill L."/>
            <person name="Bason N."/>
            <person name="Farbrother P."/>
            <person name="Desany B."/>
            <person name="Just E."/>
            <person name="Morio T."/>
            <person name="Rost R."/>
            <person name="Churcher C.M."/>
            <person name="Cooper J."/>
            <person name="Haydock S."/>
            <person name="van Driessche N."/>
            <person name="Cronin A."/>
            <person name="Goodhead I."/>
            <person name="Muzny D.M."/>
            <person name="Mourier T."/>
            <person name="Pain A."/>
            <person name="Lu M."/>
            <person name="Harper D."/>
            <person name="Lindsay R."/>
            <person name="Hauser H."/>
            <person name="James K.D."/>
            <person name="Quiles M."/>
            <person name="Madan Babu M."/>
            <person name="Saito T."/>
            <person name="Buchrieser C."/>
            <person name="Wardroper A."/>
            <person name="Felder M."/>
            <person name="Thangavelu M."/>
            <person name="Johnson D."/>
            <person name="Knights A."/>
            <person name="Loulseged H."/>
            <person name="Mungall K.L."/>
            <person name="Oliver K."/>
            <person name="Price C."/>
            <person name="Quail M.A."/>
            <person name="Urushihara H."/>
            <person name="Hernandez J."/>
            <person name="Rabbinowitsch E."/>
            <person name="Steffen D."/>
            <person name="Sanders M."/>
            <person name="Ma J."/>
            <person name="Kohara Y."/>
            <person name="Sharp S."/>
            <person name="Simmonds M.N."/>
            <person name="Spiegler S."/>
            <person name="Tivey A."/>
            <person name="Sugano S."/>
            <person name="White B."/>
            <person name="Walker D."/>
            <person name="Woodward J.R."/>
            <person name="Winckler T."/>
            <person name="Tanaka Y."/>
            <person name="Shaulsky G."/>
            <person name="Schleicher M."/>
            <person name="Weinstock G.M."/>
            <person name="Rosenthal A."/>
            <person name="Cox E.C."/>
            <person name="Chisholm R.L."/>
            <person name="Gibbs R.A."/>
            <person name="Loomis W.F."/>
            <person name="Platzer M."/>
            <person name="Kay R.R."/>
            <person name="Williams J.G."/>
            <person name="Dear P.H."/>
            <person name="Noegel A.A."/>
            <person name="Barrell B.G."/>
            <person name="Kuspa A."/>
        </authorList>
    </citation>
    <scope>NUCLEOTIDE SEQUENCE [LARGE SCALE GENOMIC DNA]</scope>
    <source>
        <strain>AX4</strain>
    </source>
</reference>
<sequence>MDSSFKRASFKLPPGVNIDNINEMNNNNMNTAPAPAPAPIPTPQPTTTTTTAPQRKVTFGSRVRAQEINATPTPTTPAPAPTTTPSENDTAKKDDFDFDPVPVSRPRATRAATMIPSNMLGDKRPIRPLGKGFIGADRQTPKPETDNNNNGNNNNNNNNNDNNNNNNNNDDDDEDEDDDEYSNVSAPSWNSVLSKAKTNTMNSRKRSGMIHDFVDVNIKNDSGGENSANTTSEDGSSSRRGTLRKAIVIGTHNPQPQQEDDVEETTSRISSLDLANVQRPRPQYHTIDPASIPQWKKNNEDLVNTMEQQQQQPQQPQQPQQQQSTVGGLFNSILKKQPNNNANNAQRLTRAEAEYNEYLTKSKSQRFPEIEALNFIYPAGKDNLGRTIIVIIASHLPVREMDMERVLLYTISIMDPVVEEEYVLVYVHTNMNNSNKPSMAWMKKVYTIFNRKYKKNLKGLYIVHPTTWIKFTLGIFKHFLSSKFWKKLTYIDDLGELFKTFPREQLALPNAIMMHRPAGKKSQPIFGAPLEDVINRPDNPGEIPVLFEKGIAYLSRRGLQVEGLFRLSGANSQIKSLRQGFDQGEDVDLEDVEDVHTVAGLLKLYLRELPSPLFPFDLYSSFIEISKGEQTKPQKVESLKLLLSLLPPANKALSKHLFKFLGKVIENSSVNKMNSVNLSIVFAPNLLKDKEGNVMDAVADAQFVNQVVQLILDNINILFNY</sequence>
<name>GACY_DICDI</name>
<dbReference type="EMBL" id="AAFI02000042">
    <property type="protein sequence ID" value="EAL66631.1"/>
    <property type="molecule type" value="Genomic_DNA"/>
</dbReference>
<dbReference type="RefSeq" id="XP_640612.1">
    <property type="nucleotide sequence ID" value="XM_635520.1"/>
</dbReference>
<dbReference type="SMR" id="Q54TH9"/>
<dbReference type="FunCoup" id="Q54TH9">
    <property type="interactions" value="27"/>
</dbReference>
<dbReference type="STRING" id="44689.Q54TH9"/>
<dbReference type="GlyGen" id="Q54TH9">
    <property type="glycosylation" value="2 sites"/>
</dbReference>
<dbReference type="PaxDb" id="44689-DDB0233758"/>
<dbReference type="EnsemblProtists" id="EAL66631">
    <property type="protein sequence ID" value="EAL66631"/>
    <property type="gene ID" value="DDB_G0281739"/>
</dbReference>
<dbReference type="GeneID" id="8623222"/>
<dbReference type="KEGG" id="ddi:DDB_G0281739"/>
<dbReference type="dictyBase" id="DDB_G0281739">
    <property type="gene designation" value="gacY"/>
</dbReference>
<dbReference type="VEuPathDB" id="AmoebaDB:DDB_G0281739"/>
<dbReference type="eggNOG" id="KOG4406">
    <property type="taxonomic scope" value="Eukaryota"/>
</dbReference>
<dbReference type="HOGENOM" id="CLU_383784_0_0_1"/>
<dbReference type="InParanoid" id="Q54TH9"/>
<dbReference type="OMA" id="PQYHTID"/>
<dbReference type="PhylomeDB" id="Q54TH9"/>
<dbReference type="PRO" id="PR:Q54TH9"/>
<dbReference type="Proteomes" id="UP000002195">
    <property type="component" value="Chromosome 3"/>
</dbReference>
<dbReference type="GO" id="GO:0005737">
    <property type="term" value="C:cytoplasm"/>
    <property type="evidence" value="ECO:0000318"/>
    <property type="project" value="GO_Central"/>
</dbReference>
<dbReference type="GO" id="GO:0005096">
    <property type="term" value="F:GTPase activator activity"/>
    <property type="evidence" value="ECO:0000318"/>
    <property type="project" value="GO_Central"/>
</dbReference>
<dbReference type="GO" id="GO:0007264">
    <property type="term" value="P:small GTPase-mediated signal transduction"/>
    <property type="evidence" value="ECO:0000318"/>
    <property type="project" value="GO_Central"/>
</dbReference>
<dbReference type="CDD" id="cd00159">
    <property type="entry name" value="RhoGAP"/>
    <property type="match status" value="1"/>
</dbReference>
<dbReference type="CDD" id="cd00170">
    <property type="entry name" value="SEC14"/>
    <property type="match status" value="1"/>
</dbReference>
<dbReference type="Gene3D" id="3.40.525.10">
    <property type="entry name" value="CRAL-TRIO lipid binding domain"/>
    <property type="match status" value="1"/>
</dbReference>
<dbReference type="Gene3D" id="1.10.555.10">
    <property type="entry name" value="Rho GTPase activation protein"/>
    <property type="match status" value="1"/>
</dbReference>
<dbReference type="InterPro" id="IPR001251">
    <property type="entry name" value="CRAL-TRIO_dom"/>
</dbReference>
<dbReference type="InterPro" id="IPR036865">
    <property type="entry name" value="CRAL-TRIO_dom_sf"/>
</dbReference>
<dbReference type="InterPro" id="IPR008936">
    <property type="entry name" value="Rho_GTPase_activation_prot"/>
</dbReference>
<dbReference type="InterPro" id="IPR000198">
    <property type="entry name" value="RhoGAP_dom"/>
</dbReference>
<dbReference type="PANTHER" id="PTHR45808">
    <property type="entry name" value="RHO GTPASE-ACTIVATING PROTEIN 68F"/>
    <property type="match status" value="1"/>
</dbReference>
<dbReference type="PANTHER" id="PTHR45808:SF2">
    <property type="entry name" value="RHO GTPASE-ACTIVATING PROTEIN 68F"/>
    <property type="match status" value="1"/>
</dbReference>
<dbReference type="Pfam" id="PF13716">
    <property type="entry name" value="CRAL_TRIO_2"/>
    <property type="match status" value="1"/>
</dbReference>
<dbReference type="Pfam" id="PF00620">
    <property type="entry name" value="RhoGAP"/>
    <property type="match status" value="1"/>
</dbReference>
<dbReference type="SMART" id="SM00324">
    <property type="entry name" value="RhoGAP"/>
    <property type="match status" value="1"/>
</dbReference>
<dbReference type="SMART" id="SM00516">
    <property type="entry name" value="SEC14"/>
    <property type="match status" value="1"/>
</dbReference>
<dbReference type="SUPFAM" id="SSF52087">
    <property type="entry name" value="CRAL/TRIO domain"/>
    <property type="match status" value="1"/>
</dbReference>
<dbReference type="SUPFAM" id="SSF48350">
    <property type="entry name" value="GTPase activation domain, GAP"/>
    <property type="match status" value="1"/>
</dbReference>
<dbReference type="PROSITE" id="PS50191">
    <property type="entry name" value="CRAL_TRIO"/>
    <property type="match status" value="1"/>
</dbReference>
<dbReference type="PROSITE" id="PS50238">
    <property type="entry name" value="RHOGAP"/>
    <property type="match status" value="1"/>
</dbReference>
<keyword id="KW-0963">Cytoplasm</keyword>
<keyword id="KW-0343">GTPase activation</keyword>
<keyword id="KW-1185">Reference proteome</keyword>
<comment type="function">
    <text evidence="1">Rho GTPase-activating protein involved in the signal transduction pathway.</text>
</comment>
<comment type="subcellular location">
    <subcellularLocation>
        <location evidence="1">Cytoplasm</location>
    </subcellularLocation>
</comment>
<organism>
    <name type="scientific">Dictyostelium discoideum</name>
    <name type="common">Social amoeba</name>
    <dbReference type="NCBI Taxonomy" id="44689"/>
    <lineage>
        <taxon>Eukaryota</taxon>
        <taxon>Amoebozoa</taxon>
        <taxon>Evosea</taxon>
        <taxon>Eumycetozoa</taxon>
        <taxon>Dictyostelia</taxon>
        <taxon>Dictyosteliales</taxon>
        <taxon>Dictyosteliaceae</taxon>
        <taxon>Dictyostelium</taxon>
    </lineage>
</organism>
<evidence type="ECO:0000250" key="1"/>
<evidence type="ECO:0000255" key="2">
    <source>
        <dbReference type="PROSITE-ProRule" id="PRU00056"/>
    </source>
</evidence>
<evidence type="ECO:0000255" key="3">
    <source>
        <dbReference type="PROSITE-ProRule" id="PRU00172"/>
    </source>
</evidence>
<evidence type="ECO:0000256" key="4">
    <source>
        <dbReference type="SAM" id="MobiDB-lite"/>
    </source>
</evidence>
<proteinExistence type="inferred from homology"/>